<proteinExistence type="inferred from homology"/>
<evidence type="ECO:0000255" key="1">
    <source>
        <dbReference type="HAMAP-Rule" id="MF_01152"/>
    </source>
</evidence>
<dbReference type="EMBL" id="CP000084">
    <property type="protein sequence ID" value="AAZ21189.1"/>
    <property type="molecule type" value="Genomic_DNA"/>
</dbReference>
<dbReference type="RefSeq" id="WP_011281657.1">
    <property type="nucleotide sequence ID" value="NC_007205.1"/>
</dbReference>
<dbReference type="SMR" id="Q4FNQ0"/>
<dbReference type="STRING" id="335992.SAR11_0367"/>
<dbReference type="GeneID" id="66294865"/>
<dbReference type="KEGG" id="pub:SAR11_0367"/>
<dbReference type="eggNOG" id="COG0484">
    <property type="taxonomic scope" value="Bacteria"/>
</dbReference>
<dbReference type="HOGENOM" id="CLU_017633_0_7_5"/>
<dbReference type="OrthoDB" id="9779889at2"/>
<dbReference type="Proteomes" id="UP000002528">
    <property type="component" value="Chromosome"/>
</dbReference>
<dbReference type="GO" id="GO:0005737">
    <property type="term" value="C:cytoplasm"/>
    <property type="evidence" value="ECO:0007669"/>
    <property type="project" value="UniProtKB-SubCell"/>
</dbReference>
<dbReference type="GO" id="GO:0005524">
    <property type="term" value="F:ATP binding"/>
    <property type="evidence" value="ECO:0007669"/>
    <property type="project" value="InterPro"/>
</dbReference>
<dbReference type="GO" id="GO:0031072">
    <property type="term" value="F:heat shock protein binding"/>
    <property type="evidence" value="ECO:0007669"/>
    <property type="project" value="InterPro"/>
</dbReference>
<dbReference type="GO" id="GO:0051082">
    <property type="term" value="F:unfolded protein binding"/>
    <property type="evidence" value="ECO:0007669"/>
    <property type="project" value="UniProtKB-UniRule"/>
</dbReference>
<dbReference type="GO" id="GO:0008270">
    <property type="term" value="F:zinc ion binding"/>
    <property type="evidence" value="ECO:0007669"/>
    <property type="project" value="UniProtKB-UniRule"/>
</dbReference>
<dbReference type="GO" id="GO:0051085">
    <property type="term" value="P:chaperone cofactor-dependent protein refolding"/>
    <property type="evidence" value="ECO:0007669"/>
    <property type="project" value="TreeGrafter"/>
</dbReference>
<dbReference type="GO" id="GO:0006260">
    <property type="term" value="P:DNA replication"/>
    <property type="evidence" value="ECO:0007669"/>
    <property type="project" value="UniProtKB-KW"/>
</dbReference>
<dbReference type="GO" id="GO:0042026">
    <property type="term" value="P:protein refolding"/>
    <property type="evidence" value="ECO:0007669"/>
    <property type="project" value="TreeGrafter"/>
</dbReference>
<dbReference type="GO" id="GO:0009408">
    <property type="term" value="P:response to heat"/>
    <property type="evidence" value="ECO:0007669"/>
    <property type="project" value="InterPro"/>
</dbReference>
<dbReference type="CDD" id="cd06257">
    <property type="entry name" value="DnaJ"/>
    <property type="match status" value="1"/>
</dbReference>
<dbReference type="CDD" id="cd10747">
    <property type="entry name" value="DnaJ_C"/>
    <property type="match status" value="1"/>
</dbReference>
<dbReference type="FunFam" id="1.10.287.110:FF:000034">
    <property type="entry name" value="Chaperone protein DnaJ"/>
    <property type="match status" value="1"/>
</dbReference>
<dbReference type="FunFam" id="2.10.230.10:FF:000002">
    <property type="entry name" value="Molecular chaperone DnaJ"/>
    <property type="match status" value="1"/>
</dbReference>
<dbReference type="FunFam" id="2.60.260.20:FF:000004">
    <property type="entry name" value="Molecular chaperone DnaJ"/>
    <property type="match status" value="1"/>
</dbReference>
<dbReference type="Gene3D" id="1.10.287.110">
    <property type="entry name" value="DnaJ domain"/>
    <property type="match status" value="1"/>
</dbReference>
<dbReference type="Gene3D" id="2.10.230.10">
    <property type="entry name" value="Heat shock protein DnaJ, cysteine-rich domain"/>
    <property type="match status" value="1"/>
</dbReference>
<dbReference type="Gene3D" id="2.60.260.20">
    <property type="entry name" value="Urease metallochaperone UreE, N-terminal domain"/>
    <property type="match status" value="2"/>
</dbReference>
<dbReference type="HAMAP" id="MF_01152">
    <property type="entry name" value="DnaJ"/>
    <property type="match status" value="1"/>
</dbReference>
<dbReference type="InterPro" id="IPR012724">
    <property type="entry name" value="DnaJ"/>
</dbReference>
<dbReference type="InterPro" id="IPR002939">
    <property type="entry name" value="DnaJ_C"/>
</dbReference>
<dbReference type="InterPro" id="IPR001623">
    <property type="entry name" value="DnaJ_domain"/>
</dbReference>
<dbReference type="InterPro" id="IPR008971">
    <property type="entry name" value="HSP40/DnaJ_pept-bd"/>
</dbReference>
<dbReference type="InterPro" id="IPR001305">
    <property type="entry name" value="HSP_DnaJ_Cys-rich_dom"/>
</dbReference>
<dbReference type="InterPro" id="IPR036410">
    <property type="entry name" value="HSP_DnaJ_Cys-rich_dom_sf"/>
</dbReference>
<dbReference type="InterPro" id="IPR036869">
    <property type="entry name" value="J_dom_sf"/>
</dbReference>
<dbReference type="NCBIfam" id="TIGR02349">
    <property type="entry name" value="DnaJ_bact"/>
    <property type="match status" value="1"/>
</dbReference>
<dbReference type="NCBIfam" id="NF008035">
    <property type="entry name" value="PRK10767.1"/>
    <property type="match status" value="1"/>
</dbReference>
<dbReference type="PANTHER" id="PTHR43096">
    <property type="entry name" value="DNAJ HOMOLOG 1, MITOCHONDRIAL-RELATED"/>
    <property type="match status" value="1"/>
</dbReference>
<dbReference type="PANTHER" id="PTHR43096:SF52">
    <property type="entry name" value="DNAJ HOMOLOG 1, MITOCHONDRIAL-RELATED"/>
    <property type="match status" value="1"/>
</dbReference>
<dbReference type="Pfam" id="PF00226">
    <property type="entry name" value="DnaJ"/>
    <property type="match status" value="1"/>
</dbReference>
<dbReference type="Pfam" id="PF01556">
    <property type="entry name" value="DnaJ_C"/>
    <property type="match status" value="1"/>
</dbReference>
<dbReference type="Pfam" id="PF00684">
    <property type="entry name" value="DnaJ_CXXCXGXG"/>
    <property type="match status" value="1"/>
</dbReference>
<dbReference type="PRINTS" id="PR00625">
    <property type="entry name" value="JDOMAIN"/>
</dbReference>
<dbReference type="SMART" id="SM00271">
    <property type="entry name" value="DnaJ"/>
    <property type="match status" value="1"/>
</dbReference>
<dbReference type="SUPFAM" id="SSF46565">
    <property type="entry name" value="Chaperone J-domain"/>
    <property type="match status" value="1"/>
</dbReference>
<dbReference type="SUPFAM" id="SSF57938">
    <property type="entry name" value="DnaJ/Hsp40 cysteine-rich domain"/>
    <property type="match status" value="1"/>
</dbReference>
<dbReference type="SUPFAM" id="SSF49493">
    <property type="entry name" value="HSP40/DnaJ peptide-binding domain"/>
    <property type="match status" value="2"/>
</dbReference>
<dbReference type="PROSITE" id="PS50076">
    <property type="entry name" value="DNAJ_2"/>
    <property type="match status" value="1"/>
</dbReference>
<dbReference type="PROSITE" id="PS51188">
    <property type="entry name" value="ZF_CR"/>
    <property type="match status" value="1"/>
</dbReference>
<protein>
    <recommendedName>
        <fullName evidence="1">Chaperone protein DnaJ</fullName>
    </recommendedName>
</protein>
<name>DNAJ_PELUB</name>
<accession>Q4FNQ0</accession>
<sequence>MAKRDFYDVLGVSKSASPEELKSAYRKLAVKYHPDKNPGDKASEDKFKEAGEAYGVLSDKEKKQNYDNFGHAAFEGGGGRQGGGFGGGFGGADFSDIFEDFFGDFGGGQSRGRRKTNNRGSDLRYDLSITLEEAYEGKKQDIKFSTTEKCNTCNGNGSKPGHSPDRCTVCGGNGKVRSNQGFFTVQQTCPQCAGSGEEITNPCTDCNGQGNKQASKKISVTIPKGVDDGTRIRLAGKGEAGSKGGANGDLYLFVNVHSHDLFKRSDENLFFEFPISIADAALGTTIEIPTIDGGKAKIKIPDGTQNGKQFRLKGKGMPYMRGSGNGDLYVQVNTEVPISLNKEQKALLEKFREIENEKSNPSIKQFFQKAKSFWKN</sequence>
<reference key="1">
    <citation type="journal article" date="2005" name="Science">
        <title>Genome streamlining in a cosmopolitan oceanic bacterium.</title>
        <authorList>
            <person name="Giovannoni S.J."/>
            <person name="Tripp H.J."/>
            <person name="Givan S."/>
            <person name="Podar M."/>
            <person name="Vergin K.L."/>
            <person name="Baptista D."/>
            <person name="Bibbs L."/>
            <person name="Eads J."/>
            <person name="Richardson T.H."/>
            <person name="Noordewier M."/>
            <person name="Rappe M.S."/>
            <person name="Short J.M."/>
            <person name="Carrington J.C."/>
            <person name="Mathur E.J."/>
        </authorList>
    </citation>
    <scope>NUCLEOTIDE SEQUENCE [LARGE SCALE GENOMIC DNA]</scope>
    <source>
        <strain>HTCC1062</strain>
    </source>
</reference>
<gene>
    <name evidence="1" type="primary">dnaJ</name>
    <name type="ordered locus">SAR11_0367</name>
</gene>
<organism>
    <name type="scientific">Pelagibacter ubique (strain HTCC1062)</name>
    <dbReference type="NCBI Taxonomy" id="335992"/>
    <lineage>
        <taxon>Bacteria</taxon>
        <taxon>Pseudomonadati</taxon>
        <taxon>Pseudomonadota</taxon>
        <taxon>Alphaproteobacteria</taxon>
        <taxon>Candidatus Pelagibacterales</taxon>
        <taxon>Candidatus Pelagibacteraceae</taxon>
        <taxon>Candidatus Pelagibacter</taxon>
    </lineage>
</organism>
<feature type="chain" id="PRO_1000085243" description="Chaperone protein DnaJ">
    <location>
        <begin position="1"/>
        <end position="376"/>
    </location>
</feature>
<feature type="domain" description="J" evidence="1">
    <location>
        <begin position="5"/>
        <end position="70"/>
    </location>
</feature>
<feature type="repeat" description="CXXCXGXG motif">
    <location>
        <begin position="150"/>
        <end position="157"/>
    </location>
</feature>
<feature type="repeat" description="CXXCXGXG motif">
    <location>
        <begin position="167"/>
        <end position="174"/>
    </location>
</feature>
<feature type="repeat" description="CXXCXGXG motif">
    <location>
        <begin position="189"/>
        <end position="196"/>
    </location>
</feature>
<feature type="repeat" description="CXXCXGXG motif">
    <location>
        <begin position="203"/>
        <end position="210"/>
    </location>
</feature>
<feature type="zinc finger region" description="CR-type" evidence="1">
    <location>
        <begin position="137"/>
        <end position="215"/>
    </location>
</feature>
<feature type="binding site" evidence="1">
    <location>
        <position position="150"/>
    </location>
    <ligand>
        <name>Zn(2+)</name>
        <dbReference type="ChEBI" id="CHEBI:29105"/>
        <label>1</label>
    </ligand>
</feature>
<feature type="binding site" evidence="1">
    <location>
        <position position="153"/>
    </location>
    <ligand>
        <name>Zn(2+)</name>
        <dbReference type="ChEBI" id="CHEBI:29105"/>
        <label>1</label>
    </ligand>
</feature>
<feature type="binding site" evidence="1">
    <location>
        <position position="167"/>
    </location>
    <ligand>
        <name>Zn(2+)</name>
        <dbReference type="ChEBI" id="CHEBI:29105"/>
        <label>2</label>
    </ligand>
</feature>
<feature type="binding site" evidence="1">
    <location>
        <position position="170"/>
    </location>
    <ligand>
        <name>Zn(2+)</name>
        <dbReference type="ChEBI" id="CHEBI:29105"/>
        <label>2</label>
    </ligand>
</feature>
<feature type="binding site" evidence="1">
    <location>
        <position position="189"/>
    </location>
    <ligand>
        <name>Zn(2+)</name>
        <dbReference type="ChEBI" id="CHEBI:29105"/>
        <label>2</label>
    </ligand>
</feature>
<feature type="binding site" evidence="1">
    <location>
        <position position="192"/>
    </location>
    <ligand>
        <name>Zn(2+)</name>
        <dbReference type="ChEBI" id="CHEBI:29105"/>
        <label>2</label>
    </ligand>
</feature>
<feature type="binding site" evidence="1">
    <location>
        <position position="203"/>
    </location>
    <ligand>
        <name>Zn(2+)</name>
        <dbReference type="ChEBI" id="CHEBI:29105"/>
        <label>1</label>
    </ligand>
</feature>
<feature type="binding site" evidence="1">
    <location>
        <position position="206"/>
    </location>
    <ligand>
        <name>Zn(2+)</name>
        <dbReference type="ChEBI" id="CHEBI:29105"/>
        <label>1</label>
    </ligand>
</feature>
<comment type="function">
    <text evidence="1">Participates actively in the response to hyperosmotic and heat shock by preventing the aggregation of stress-denatured proteins and by disaggregating proteins, also in an autonomous, DnaK-independent fashion. Unfolded proteins bind initially to DnaJ; upon interaction with the DnaJ-bound protein, DnaK hydrolyzes its bound ATP, resulting in the formation of a stable complex. GrpE releases ADP from DnaK; ATP binding to DnaK triggers the release of the substrate protein, thus completing the reaction cycle. Several rounds of ATP-dependent interactions between DnaJ, DnaK and GrpE are required for fully efficient folding. Also involved, together with DnaK and GrpE, in the DNA replication of plasmids through activation of initiation proteins.</text>
</comment>
<comment type="cofactor">
    <cofactor evidence="1">
        <name>Zn(2+)</name>
        <dbReference type="ChEBI" id="CHEBI:29105"/>
    </cofactor>
    <text evidence="1">Binds 2 Zn(2+) ions per monomer.</text>
</comment>
<comment type="subunit">
    <text evidence="1">Homodimer.</text>
</comment>
<comment type="subcellular location">
    <subcellularLocation>
        <location evidence="1">Cytoplasm</location>
    </subcellularLocation>
</comment>
<comment type="domain">
    <text evidence="1">The J domain is necessary and sufficient to stimulate DnaK ATPase activity. Zinc center 1 plays an important role in the autonomous, DnaK-independent chaperone activity of DnaJ. Zinc center 2 is essential for interaction with DnaK and for DnaJ activity.</text>
</comment>
<comment type="similarity">
    <text evidence="1">Belongs to the DnaJ family.</text>
</comment>
<keyword id="KW-0143">Chaperone</keyword>
<keyword id="KW-0963">Cytoplasm</keyword>
<keyword id="KW-0235">DNA replication</keyword>
<keyword id="KW-0479">Metal-binding</keyword>
<keyword id="KW-1185">Reference proteome</keyword>
<keyword id="KW-0677">Repeat</keyword>
<keyword id="KW-0346">Stress response</keyword>
<keyword id="KW-0862">Zinc</keyword>
<keyword id="KW-0863">Zinc-finger</keyword>